<feature type="chain" id="PRO_1000025920" description="RNA-binding protein Hfq">
    <location>
        <begin position="1"/>
        <end position="83"/>
    </location>
</feature>
<feature type="domain" description="Sm" evidence="2">
    <location>
        <begin position="9"/>
        <end position="68"/>
    </location>
</feature>
<keyword id="KW-0694">RNA-binding</keyword>
<keyword id="KW-0346">Stress response</keyword>
<evidence type="ECO:0000255" key="1">
    <source>
        <dbReference type="HAMAP-Rule" id="MF_00436"/>
    </source>
</evidence>
<evidence type="ECO:0000255" key="2">
    <source>
        <dbReference type="PROSITE-ProRule" id="PRU01346"/>
    </source>
</evidence>
<accession>A1U4C5</accession>
<organism>
    <name type="scientific">Marinobacter nauticus (strain ATCC 700491 / DSM 11845 / VT8)</name>
    <name type="common">Marinobacter aquaeolei</name>
    <dbReference type="NCBI Taxonomy" id="351348"/>
    <lineage>
        <taxon>Bacteria</taxon>
        <taxon>Pseudomonadati</taxon>
        <taxon>Pseudomonadota</taxon>
        <taxon>Gammaproteobacteria</taxon>
        <taxon>Pseudomonadales</taxon>
        <taxon>Marinobacteraceae</taxon>
        <taxon>Marinobacter</taxon>
    </lineage>
</organism>
<proteinExistence type="inferred from homology"/>
<reference key="1">
    <citation type="journal article" date="2011" name="Appl. Environ. Microbiol.">
        <title>Genomic potential of Marinobacter aquaeolei, a biogeochemical 'opportunitroph'.</title>
        <authorList>
            <person name="Singer E."/>
            <person name="Webb E.A."/>
            <person name="Nelson W.C."/>
            <person name="Heidelberg J.F."/>
            <person name="Ivanova N."/>
            <person name="Pati A."/>
            <person name="Edwards K.J."/>
        </authorList>
    </citation>
    <scope>NUCLEOTIDE SEQUENCE [LARGE SCALE GENOMIC DNA]</scope>
    <source>
        <strain>ATCC 700491 / DSM 11845 / VT8</strain>
    </source>
</reference>
<comment type="function">
    <text evidence="1">RNA chaperone that binds small regulatory RNA (sRNAs) and mRNAs to facilitate mRNA translational regulation in response to envelope stress, environmental stress and changes in metabolite concentrations. Also binds with high specificity to tRNAs.</text>
</comment>
<comment type="subunit">
    <text evidence="1">Homohexamer.</text>
</comment>
<comment type="similarity">
    <text evidence="1">Belongs to the Hfq family.</text>
</comment>
<dbReference type="EMBL" id="CP000514">
    <property type="protein sequence ID" value="ABM19844.1"/>
    <property type="molecule type" value="Genomic_DNA"/>
</dbReference>
<dbReference type="RefSeq" id="WP_011786214.1">
    <property type="nucleotide sequence ID" value="NC_008740.1"/>
</dbReference>
<dbReference type="SMR" id="A1U4C5"/>
<dbReference type="STRING" id="351348.Maqu_2769"/>
<dbReference type="KEGG" id="maq:Maqu_2769"/>
<dbReference type="eggNOG" id="COG1923">
    <property type="taxonomic scope" value="Bacteria"/>
</dbReference>
<dbReference type="HOGENOM" id="CLU_113688_2_2_6"/>
<dbReference type="OrthoDB" id="9799751at2"/>
<dbReference type="Proteomes" id="UP000000998">
    <property type="component" value="Chromosome"/>
</dbReference>
<dbReference type="GO" id="GO:0005829">
    <property type="term" value="C:cytosol"/>
    <property type="evidence" value="ECO:0007669"/>
    <property type="project" value="TreeGrafter"/>
</dbReference>
<dbReference type="GO" id="GO:0003723">
    <property type="term" value="F:RNA binding"/>
    <property type="evidence" value="ECO:0007669"/>
    <property type="project" value="UniProtKB-UniRule"/>
</dbReference>
<dbReference type="GO" id="GO:0006355">
    <property type="term" value="P:regulation of DNA-templated transcription"/>
    <property type="evidence" value="ECO:0007669"/>
    <property type="project" value="InterPro"/>
</dbReference>
<dbReference type="GO" id="GO:0043487">
    <property type="term" value="P:regulation of RNA stability"/>
    <property type="evidence" value="ECO:0007669"/>
    <property type="project" value="TreeGrafter"/>
</dbReference>
<dbReference type="GO" id="GO:0045974">
    <property type="term" value="P:regulation of translation, ncRNA-mediated"/>
    <property type="evidence" value="ECO:0007669"/>
    <property type="project" value="TreeGrafter"/>
</dbReference>
<dbReference type="CDD" id="cd01716">
    <property type="entry name" value="Hfq"/>
    <property type="match status" value="1"/>
</dbReference>
<dbReference type="FunFam" id="2.30.30.100:FF:000001">
    <property type="entry name" value="RNA-binding protein Hfq"/>
    <property type="match status" value="1"/>
</dbReference>
<dbReference type="Gene3D" id="2.30.30.100">
    <property type="match status" value="1"/>
</dbReference>
<dbReference type="HAMAP" id="MF_00436">
    <property type="entry name" value="Hfq"/>
    <property type="match status" value="1"/>
</dbReference>
<dbReference type="InterPro" id="IPR005001">
    <property type="entry name" value="Hfq"/>
</dbReference>
<dbReference type="InterPro" id="IPR010920">
    <property type="entry name" value="LSM_dom_sf"/>
</dbReference>
<dbReference type="InterPro" id="IPR047575">
    <property type="entry name" value="Sm"/>
</dbReference>
<dbReference type="NCBIfam" id="TIGR02383">
    <property type="entry name" value="Hfq"/>
    <property type="match status" value="1"/>
</dbReference>
<dbReference type="NCBIfam" id="NF001602">
    <property type="entry name" value="PRK00395.1"/>
    <property type="match status" value="1"/>
</dbReference>
<dbReference type="PANTHER" id="PTHR34772">
    <property type="entry name" value="RNA-BINDING PROTEIN HFQ"/>
    <property type="match status" value="1"/>
</dbReference>
<dbReference type="PANTHER" id="PTHR34772:SF1">
    <property type="entry name" value="RNA-BINDING PROTEIN HFQ"/>
    <property type="match status" value="1"/>
</dbReference>
<dbReference type="Pfam" id="PF17209">
    <property type="entry name" value="Hfq"/>
    <property type="match status" value="1"/>
</dbReference>
<dbReference type="SUPFAM" id="SSF50182">
    <property type="entry name" value="Sm-like ribonucleoproteins"/>
    <property type="match status" value="1"/>
</dbReference>
<dbReference type="PROSITE" id="PS52002">
    <property type="entry name" value="SM"/>
    <property type="match status" value="1"/>
</dbReference>
<gene>
    <name evidence="1" type="primary">hfq</name>
    <name type="ordered locus">Maqu_2769</name>
</gene>
<sequence>MSKGHSLQDPYLNALRKERIPVSIFLVNGIKLQGQIESFDQFVILLKNTVSQMVYKHAISTVVPARNVRLPQQNPAGEGESED</sequence>
<name>HFQ_MARN8</name>
<protein>
    <recommendedName>
        <fullName evidence="1">RNA-binding protein Hfq</fullName>
    </recommendedName>
</protein>